<feature type="chain" id="PRO_0000221861" description="Shutoff protein">
    <location>
        <begin position="1"/>
        <end position="689"/>
    </location>
</feature>
<feature type="domain" description="RRM" evidence="1">
    <location>
        <begin position="292"/>
        <end position="410"/>
    </location>
</feature>
<feature type="region of interest" description="Disordered" evidence="2">
    <location>
        <begin position="1"/>
        <end position="24"/>
    </location>
</feature>
<feature type="region of interest" description="Binding to host EIF4G" evidence="1">
    <location>
        <begin position="226"/>
        <end position="289"/>
    </location>
</feature>
<feature type="region of interest" description="Disordered" evidence="2">
    <location>
        <begin position="625"/>
        <end position="689"/>
    </location>
</feature>
<feature type="compositionally biased region" description="Basic and acidic residues" evidence="2">
    <location>
        <begin position="645"/>
        <end position="655"/>
    </location>
</feature>
<feature type="compositionally biased region" description="Basic residues" evidence="2">
    <location>
        <begin position="656"/>
        <end position="675"/>
    </location>
</feature>
<feature type="compositionally biased region" description="Basic and acidic residues" evidence="2">
    <location>
        <begin position="678"/>
        <end position="689"/>
    </location>
</feature>
<feature type="modified residue" description="Phosphotyrosine; by host" evidence="1">
    <location>
        <position position="309"/>
    </location>
</feature>
<feature type="modified residue" description="Phosphotyrosine; by host" evidence="1">
    <location>
        <position position="627"/>
    </location>
</feature>
<dbReference type="EMBL" id="Y07760">
    <property type="protein sequence ID" value="CAA69039.1"/>
    <property type="molecule type" value="Genomic_DNA"/>
</dbReference>
<dbReference type="RefSeq" id="AP_000062.1">
    <property type="nucleotide sequence ID" value="AC_000003.1"/>
</dbReference>
<dbReference type="SMR" id="P68967"/>
<dbReference type="KEGG" id="vg:1488934"/>
<dbReference type="Proteomes" id="UP000126130">
    <property type="component" value="Segment"/>
</dbReference>
<dbReference type="GO" id="GO:0043657">
    <property type="term" value="C:host cell"/>
    <property type="evidence" value="ECO:0007669"/>
    <property type="project" value="GOC"/>
</dbReference>
<dbReference type="GO" id="GO:0030430">
    <property type="term" value="C:host cell cytoplasm"/>
    <property type="evidence" value="ECO:0007669"/>
    <property type="project" value="UniProtKB-SubCell"/>
</dbReference>
<dbReference type="GO" id="GO:0003723">
    <property type="term" value="F:RNA binding"/>
    <property type="evidence" value="ECO:0007669"/>
    <property type="project" value="UniProtKB-UniRule"/>
</dbReference>
<dbReference type="GO" id="GO:0019060">
    <property type="term" value="P:intracellular transport of viral protein in host cell"/>
    <property type="evidence" value="ECO:0007669"/>
    <property type="project" value="UniProtKB-UniRule"/>
</dbReference>
<dbReference type="GO" id="GO:0039657">
    <property type="term" value="P:symbiont-mediated suppression of host gene expression"/>
    <property type="evidence" value="ECO:0007669"/>
    <property type="project" value="UniProtKB-UniRule"/>
</dbReference>
<dbReference type="GO" id="GO:0039606">
    <property type="term" value="P:symbiont-mediated suppression of host translation initiation"/>
    <property type="evidence" value="ECO:0007669"/>
    <property type="project" value="UniProtKB-KW"/>
</dbReference>
<dbReference type="GO" id="GO:0039704">
    <property type="term" value="P:viral translational shunt"/>
    <property type="evidence" value="ECO:0000250"/>
    <property type="project" value="UniProtKB"/>
</dbReference>
<dbReference type="HAMAP" id="MF_04060">
    <property type="entry name" value="ADV_SHUT"/>
    <property type="match status" value="1"/>
</dbReference>
<dbReference type="InterPro" id="IPR003381">
    <property type="entry name" value="L4"/>
</dbReference>
<dbReference type="Pfam" id="PF02438">
    <property type="entry name" value="Adeno_100"/>
    <property type="match status" value="1"/>
</dbReference>
<reference key="1">
    <citation type="journal article" date="1997" name="J. Gen. Virol.">
        <title>Complete DNA sequence of canine adenovirus type 1.</title>
        <authorList>
            <person name="Morrison M.D."/>
            <person name="Onions D.E."/>
            <person name="Nicolson L."/>
        </authorList>
    </citation>
    <scope>NUCLEOTIDE SEQUENCE [LARGE SCALE GENOMIC DNA]</scope>
</reference>
<sequence length="689" mass="77373">MSEEPVSGTTVEIEEDTHTPPNSPVLETFSLSPEPEAEACPNTDRYLSANLLCKHLQRQSAIVLDSIKDQLQVPTSVSELSCAYERSLLCPNIPPKQQSNGTCEANPKLNFYPTFLVPETLATYHIFFVNQKIPVSCKANRAKADKALTLQEGDCLPDYETMDTVSRVFEGLGGEVVAENALQNNDSVLVELKEDNPRLAVLKRNLSVSHFAYPAVHLPPKIITTVMNNLLVKRANPSADVSELDPDGGQEVVSDTELSRWLNTSDPETLEKQRKLVMGSVLVTVVLECMQRLFTSKDMVKKIGETLHYTFRHGYVSLACKISNVELTNVVTYMGILHENRLGQTTLHHTIQGETRRDYIRDSIFLILIHTWQTAMGIWQQCLEEENLKELAKLVQKIKKPLYTETSQRLMGKQLANVVFPPKLLETFNKGLPDIVNQSMMQNFRSFILERSGILPSMTCALPTDFIPIHFKECPPTMWPYTYLLRLANFFMYHNDLCYDMEGEGLLEHYCRCNLCTPHRCLATNPAMLNETQLIGTFDIRGPGGENGAESSSGLKLTAGMWTSAFLRKFESSDYHAHKIHFYENQSKPPSVEPTPCVITQSSILAQLHDIKKAREEFLLKKGQGQYLDPHTGEPLNAAGPSVESGHEFQGDGRHREPKRGRHFRQRGGPRKPPRAHAGGEPDVRGTTS</sequence>
<keyword id="KW-0143">Chaperone</keyword>
<keyword id="KW-1262">Eukaryotic host gene expression shutoff by virus</keyword>
<keyword id="KW-1193">Eukaryotic host translation shutoff by virus</keyword>
<keyword id="KW-1035">Host cytoplasm</keyword>
<keyword id="KW-1190">Host gene expression shutoff by virus</keyword>
<keyword id="KW-0945">Host-virus interaction</keyword>
<keyword id="KW-1075">Inhibition of eukaryotic host translation factors by virus</keyword>
<keyword id="KW-0426">Late protein</keyword>
<keyword id="KW-0488">Methylation</keyword>
<keyword id="KW-0597">Phosphoprotein</keyword>
<keyword id="KW-0694">RNA-binding</keyword>
<keyword id="KW-1155">Translational shunt</keyword>
<keyword id="KW-0813">Transport</keyword>
<protein>
    <recommendedName>
        <fullName evidence="1">Shutoff protein</fullName>
    </recommendedName>
    <alternativeName>
        <fullName evidence="1">100 kDa protein</fullName>
        <shortName evidence="1">p100K</shortName>
    </alternativeName>
    <alternativeName>
        <fullName evidence="1">100K-chaperone protein</fullName>
    </alternativeName>
    <alternativeName>
        <fullName evidence="1">L4-100K</fullName>
    </alternativeName>
    <alternativeName>
        <fullName evidence="1">Shutoff protein 100K</fullName>
    </alternativeName>
</protein>
<organismHost>
    <name type="scientific">Canis lupus familiaris</name>
    <name type="common">Dog</name>
    <name type="synonym">Canis familiaris</name>
    <dbReference type="NCBI Taxonomy" id="9615"/>
</organismHost>
<comment type="function">
    <text evidence="1">Protein that inhibits host translation while promoting late viral translation by ribosome shunting. Blocks host cap-dependent translation by binding to eIF4G, displacing MKNK1 from cap initiation complexes and preventing EIF4E phosphorylation. Binds to the tripartite leader sequence of viral late mRNAs and recruits host eIF4G, PABPC1/poly-A binding protein and 40S ribosomes subunits on viral mRNAs, allowing ribosome shunting and efficient translation of late viral mRNAs even though conventional translation via ribosome scanning from the cap has been shut off in the host cell. During assembly, acts as a chaperone protein that helps hexon proteins assembly into trimers.</text>
</comment>
<comment type="subunit">
    <text evidence="1">Monomer. Interacts with hexon protein; this interaction allows chaperoning and trimerization of hexon proteins. Interacts (via N-terminus) with host initiation factor EIF4G (via C-terminus). Interacts (via RRM domain) with viral mRNAs that contain the tripartite leader; this interaction allows ribosome shunting and expression of viral late mRNAs.</text>
</comment>
<comment type="subcellular location">
    <subcellularLocation>
        <location evidence="1">Host cytoplasm</location>
    </subcellularLocation>
</comment>
<comment type="induction">
    <text evidence="1">Expressed in the late phase of the viral replicative cycle.</text>
</comment>
<comment type="PTM">
    <text evidence="1">Might be cleaved by the viral protease.</text>
</comment>
<comment type="PTM">
    <text evidence="1">Phosphorylated. Tyrosine phosphorylation enhances preferential binding to tripartite leader mRNAs and allows ribosome shunting.</text>
</comment>
<comment type="PTM">
    <text evidence="1">Methylated. Asymmetric dimethylation by host PRMT1 of the Arg/Gly-rich region may regulate shutoff protein binding to hexon and promote the capsid assembly in the nucleus.</text>
</comment>
<comment type="miscellaneous">
    <text evidence="1">All late proteins expressed from the major late promoter are produced by alternative splicing and alternative polyadenylation of the same gene giving rise to non-overlapping ORFs. A leader sequence is present in the N-terminus of all these mRNAs and is recognized by the viral shutoff protein to provide expression although conventional translation via ribosome scanning from the cap has been shut off in the host cell.</text>
</comment>
<comment type="similarity">
    <text evidence="1">Belongs to the adenoviridae shutoff protein family.</text>
</comment>
<proteinExistence type="inferred from homology"/>
<evidence type="ECO:0000255" key="1">
    <source>
        <dbReference type="HAMAP-Rule" id="MF_04060"/>
    </source>
</evidence>
<evidence type="ECO:0000256" key="2">
    <source>
        <dbReference type="SAM" id="MobiDB-lite"/>
    </source>
</evidence>
<name>SHUT_ADECR</name>
<accession>P68967</accession>
<accession>Q65957</accession>
<organism>
    <name type="scientific">Canine adenovirus serotype 1 (strain RI261)</name>
    <name type="common">CAdV-1</name>
    <name type="synonym">Canine adenovirus 1 (strain RI261)</name>
    <dbReference type="NCBI Taxonomy" id="69151"/>
    <lineage>
        <taxon>Viruses</taxon>
        <taxon>Varidnaviria</taxon>
        <taxon>Bamfordvirae</taxon>
        <taxon>Preplasmiviricota</taxon>
        <taxon>Tectiliviricetes</taxon>
        <taxon>Rowavirales</taxon>
        <taxon>Adenoviridae</taxon>
        <taxon>Mastadenovirus</taxon>
        <taxon>Canine mastadenovirus A</taxon>
    </lineage>
</organism>
<gene>
    <name evidence="1" type="primary">L4</name>
</gene>